<evidence type="ECO:0000255" key="1">
    <source>
        <dbReference type="HAMAP-Rule" id="MF_00390"/>
    </source>
</evidence>
<keyword id="KW-0963">Cytoplasm</keyword>
<keyword id="KW-0808">Transferase</keyword>
<keyword id="KW-0819">tRNA processing</keyword>
<sequence>MRYAIMVTGPAYGTQQASSALQFAHALLNEGHELASVFFYREGVYNANLLTSPASDEYDLVRVWQKLNTQHGVALNICVAAALRRGIIDETEAGRLELPSANLQPGFTLSGLGALAEASLTCDRVVQF</sequence>
<gene>
    <name evidence="1" type="primary">tusD</name>
    <name type="ordered locus">STY4347</name>
    <name type="ordered locus">t4054</name>
</gene>
<proteinExistence type="inferred from homology"/>
<comment type="function">
    <text evidence="1">Part of a sulfur-relay system required for 2-thiolation of 5-methylaminomethyl-2-thiouridine (mnm(5)s(2)U) at tRNA wobble positions. Accepts sulfur from TusA and transfers it in turn to TusE.</text>
</comment>
<comment type="subunit">
    <text evidence="1">Heterohexamer, formed by a dimer of trimers. The hexameric TusBCD complex contains 2 copies each of TusB, TusC and TusD. The TusBCD complex interacts with TusE.</text>
</comment>
<comment type="subcellular location">
    <subcellularLocation>
        <location evidence="1">Cytoplasm</location>
    </subcellularLocation>
</comment>
<comment type="similarity">
    <text evidence="1">Belongs to the DsrE/TusD family.</text>
</comment>
<protein>
    <recommendedName>
        <fullName evidence="1">Sulfurtransferase TusD</fullName>
        <ecNumber evidence="1">2.8.1.-</ecNumber>
    </recommendedName>
    <alternativeName>
        <fullName evidence="1">tRNA 2-thiouridine synthesizing protein D</fullName>
    </alternativeName>
</protein>
<accession>Q8Z1Y3</accession>
<name>TUSD_SALTI</name>
<dbReference type="EC" id="2.8.1.-" evidence="1"/>
<dbReference type="EMBL" id="AL513382">
    <property type="protein sequence ID" value="CAD08162.1"/>
    <property type="molecule type" value="Genomic_DNA"/>
</dbReference>
<dbReference type="EMBL" id="AE014613">
    <property type="protein sequence ID" value="AAO71521.1"/>
    <property type="molecule type" value="Genomic_DNA"/>
</dbReference>
<dbReference type="RefSeq" id="NP_458449.1">
    <property type="nucleotide sequence ID" value="NC_003198.1"/>
</dbReference>
<dbReference type="RefSeq" id="WP_001268013.1">
    <property type="nucleotide sequence ID" value="NZ_WSUR01000001.1"/>
</dbReference>
<dbReference type="SMR" id="Q8Z1Y3"/>
<dbReference type="STRING" id="220341.gene:17588175"/>
<dbReference type="KEGG" id="stt:t4054"/>
<dbReference type="KEGG" id="sty:STY4347"/>
<dbReference type="PATRIC" id="fig|220341.7.peg.4442"/>
<dbReference type="eggNOG" id="COG1553">
    <property type="taxonomic scope" value="Bacteria"/>
</dbReference>
<dbReference type="HOGENOM" id="CLU_132095_0_0_6"/>
<dbReference type="OMA" id="PYNHQAS"/>
<dbReference type="OrthoDB" id="9787483at2"/>
<dbReference type="Proteomes" id="UP000000541">
    <property type="component" value="Chromosome"/>
</dbReference>
<dbReference type="Proteomes" id="UP000002670">
    <property type="component" value="Chromosome"/>
</dbReference>
<dbReference type="GO" id="GO:1990228">
    <property type="term" value="C:sulfurtransferase complex"/>
    <property type="evidence" value="ECO:0007669"/>
    <property type="project" value="TreeGrafter"/>
</dbReference>
<dbReference type="GO" id="GO:0097163">
    <property type="term" value="F:sulfur carrier activity"/>
    <property type="evidence" value="ECO:0007669"/>
    <property type="project" value="TreeGrafter"/>
</dbReference>
<dbReference type="GO" id="GO:0016783">
    <property type="term" value="F:sulfurtransferase activity"/>
    <property type="evidence" value="ECO:0007669"/>
    <property type="project" value="UniProtKB-UniRule"/>
</dbReference>
<dbReference type="GO" id="GO:0002143">
    <property type="term" value="P:tRNA wobble position uridine thiolation"/>
    <property type="evidence" value="ECO:0007669"/>
    <property type="project" value="TreeGrafter"/>
</dbReference>
<dbReference type="FunFam" id="3.40.1260.10:FF:000001">
    <property type="entry name" value="Sulfurtransferase TusD"/>
    <property type="match status" value="1"/>
</dbReference>
<dbReference type="Gene3D" id="3.40.1260.10">
    <property type="entry name" value="DsrEFH-like"/>
    <property type="match status" value="1"/>
</dbReference>
<dbReference type="HAMAP" id="MF_00390">
    <property type="entry name" value="Thiourid_synth_D"/>
    <property type="match status" value="1"/>
</dbReference>
<dbReference type="InterPro" id="IPR027396">
    <property type="entry name" value="DsrEFH-like"/>
</dbReference>
<dbReference type="InterPro" id="IPR003787">
    <property type="entry name" value="Sulphur_relay_DsrE/F-like"/>
</dbReference>
<dbReference type="InterPro" id="IPR017463">
    <property type="entry name" value="Sulphur_relay_TusD/DsrE"/>
</dbReference>
<dbReference type="NCBIfam" id="NF001237">
    <property type="entry name" value="PRK00207.1"/>
    <property type="match status" value="1"/>
</dbReference>
<dbReference type="NCBIfam" id="TIGR03012">
    <property type="entry name" value="sulf_tusD_dsrE"/>
    <property type="match status" value="1"/>
</dbReference>
<dbReference type="PANTHER" id="PTHR34874">
    <property type="entry name" value="PROTEIN YCHN"/>
    <property type="match status" value="1"/>
</dbReference>
<dbReference type="PANTHER" id="PTHR34874:SF3">
    <property type="entry name" value="SULFURTRANSFERASE TUSD"/>
    <property type="match status" value="1"/>
</dbReference>
<dbReference type="Pfam" id="PF02635">
    <property type="entry name" value="DsrE"/>
    <property type="match status" value="1"/>
</dbReference>
<dbReference type="SUPFAM" id="SSF75169">
    <property type="entry name" value="DsrEFH-like"/>
    <property type="match status" value="1"/>
</dbReference>
<feature type="chain" id="PRO_0000214733" description="Sulfurtransferase TusD">
    <location>
        <begin position="1"/>
        <end position="128"/>
    </location>
</feature>
<feature type="active site" description="Cysteine persulfide intermediate" evidence="1">
    <location>
        <position position="78"/>
    </location>
</feature>
<organism>
    <name type="scientific">Salmonella typhi</name>
    <dbReference type="NCBI Taxonomy" id="90370"/>
    <lineage>
        <taxon>Bacteria</taxon>
        <taxon>Pseudomonadati</taxon>
        <taxon>Pseudomonadota</taxon>
        <taxon>Gammaproteobacteria</taxon>
        <taxon>Enterobacterales</taxon>
        <taxon>Enterobacteriaceae</taxon>
        <taxon>Salmonella</taxon>
    </lineage>
</organism>
<reference key="1">
    <citation type="journal article" date="2001" name="Nature">
        <title>Complete genome sequence of a multiple drug resistant Salmonella enterica serovar Typhi CT18.</title>
        <authorList>
            <person name="Parkhill J."/>
            <person name="Dougan G."/>
            <person name="James K.D."/>
            <person name="Thomson N.R."/>
            <person name="Pickard D."/>
            <person name="Wain J."/>
            <person name="Churcher C.M."/>
            <person name="Mungall K.L."/>
            <person name="Bentley S.D."/>
            <person name="Holden M.T.G."/>
            <person name="Sebaihia M."/>
            <person name="Baker S."/>
            <person name="Basham D."/>
            <person name="Brooks K."/>
            <person name="Chillingworth T."/>
            <person name="Connerton P."/>
            <person name="Cronin A."/>
            <person name="Davis P."/>
            <person name="Davies R.M."/>
            <person name="Dowd L."/>
            <person name="White N."/>
            <person name="Farrar J."/>
            <person name="Feltwell T."/>
            <person name="Hamlin N."/>
            <person name="Haque A."/>
            <person name="Hien T.T."/>
            <person name="Holroyd S."/>
            <person name="Jagels K."/>
            <person name="Krogh A."/>
            <person name="Larsen T.S."/>
            <person name="Leather S."/>
            <person name="Moule S."/>
            <person name="O'Gaora P."/>
            <person name="Parry C."/>
            <person name="Quail M.A."/>
            <person name="Rutherford K.M."/>
            <person name="Simmonds M."/>
            <person name="Skelton J."/>
            <person name="Stevens K."/>
            <person name="Whitehead S."/>
            <person name="Barrell B.G."/>
        </authorList>
    </citation>
    <scope>NUCLEOTIDE SEQUENCE [LARGE SCALE GENOMIC DNA]</scope>
    <source>
        <strain>CT18</strain>
    </source>
</reference>
<reference key="2">
    <citation type="journal article" date="2003" name="J. Bacteriol.">
        <title>Comparative genomics of Salmonella enterica serovar Typhi strains Ty2 and CT18.</title>
        <authorList>
            <person name="Deng W."/>
            <person name="Liou S.-R."/>
            <person name="Plunkett G. III"/>
            <person name="Mayhew G.F."/>
            <person name="Rose D.J."/>
            <person name="Burland V."/>
            <person name="Kodoyianni V."/>
            <person name="Schwartz D.C."/>
            <person name="Blattner F.R."/>
        </authorList>
    </citation>
    <scope>NUCLEOTIDE SEQUENCE [LARGE SCALE GENOMIC DNA]</scope>
    <source>
        <strain>ATCC 700931 / Ty2</strain>
    </source>
</reference>